<gene>
    <name evidence="1" type="primary">dapD</name>
    <name type="ordered locus">AHA_1170</name>
</gene>
<feature type="chain" id="PRO_1000047114" description="2,3,4,5-tetrahydropyridine-2,6-dicarboxylate N-succinyltransferase">
    <location>
        <begin position="1"/>
        <end position="275"/>
    </location>
</feature>
<feature type="binding site" evidence="1">
    <location>
        <position position="104"/>
    </location>
    <ligand>
        <name>substrate</name>
    </ligand>
</feature>
<feature type="binding site" evidence="1">
    <location>
        <position position="141"/>
    </location>
    <ligand>
        <name>substrate</name>
    </ligand>
</feature>
<comment type="catalytic activity">
    <reaction evidence="1">
        <text>(S)-2,3,4,5-tetrahydrodipicolinate + succinyl-CoA + H2O = (S)-2-succinylamino-6-oxoheptanedioate + CoA</text>
        <dbReference type="Rhea" id="RHEA:17325"/>
        <dbReference type="ChEBI" id="CHEBI:15377"/>
        <dbReference type="ChEBI" id="CHEBI:15685"/>
        <dbReference type="ChEBI" id="CHEBI:16845"/>
        <dbReference type="ChEBI" id="CHEBI:57287"/>
        <dbReference type="ChEBI" id="CHEBI:57292"/>
        <dbReference type="EC" id="2.3.1.117"/>
    </reaction>
</comment>
<comment type="pathway">
    <text evidence="1">Amino-acid biosynthesis; L-lysine biosynthesis via DAP pathway; LL-2,6-diaminopimelate from (S)-tetrahydrodipicolinate (succinylase route): step 1/3.</text>
</comment>
<comment type="subunit">
    <text evidence="1">Homotrimer.</text>
</comment>
<comment type="subcellular location">
    <subcellularLocation>
        <location evidence="1">Cytoplasm</location>
    </subcellularLocation>
</comment>
<comment type="similarity">
    <text evidence="1">Belongs to the transferase hexapeptide repeat family.</text>
</comment>
<dbReference type="EC" id="2.3.1.117" evidence="1"/>
<dbReference type="EMBL" id="CP000462">
    <property type="protein sequence ID" value="ABK38060.1"/>
    <property type="molecule type" value="Genomic_DNA"/>
</dbReference>
<dbReference type="RefSeq" id="WP_005303473.1">
    <property type="nucleotide sequence ID" value="NC_008570.1"/>
</dbReference>
<dbReference type="RefSeq" id="YP_855711.1">
    <property type="nucleotide sequence ID" value="NC_008570.1"/>
</dbReference>
<dbReference type="SMR" id="A0KHG0"/>
<dbReference type="STRING" id="380703.AHA_1170"/>
<dbReference type="EnsemblBacteria" id="ABK38060">
    <property type="protein sequence ID" value="ABK38060"/>
    <property type="gene ID" value="AHA_1170"/>
</dbReference>
<dbReference type="GeneID" id="47846524"/>
<dbReference type="KEGG" id="aha:AHA_1170"/>
<dbReference type="PATRIC" id="fig|380703.7.peg.1177"/>
<dbReference type="eggNOG" id="COG2171">
    <property type="taxonomic scope" value="Bacteria"/>
</dbReference>
<dbReference type="HOGENOM" id="CLU_050859_0_1_6"/>
<dbReference type="OrthoDB" id="9775362at2"/>
<dbReference type="UniPathway" id="UPA00034">
    <property type="reaction ID" value="UER00019"/>
</dbReference>
<dbReference type="PRO" id="PR:A0KHG0"/>
<dbReference type="Proteomes" id="UP000000756">
    <property type="component" value="Chromosome"/>
</dbReference>
<dbReference type="GO" id="GO:0005737">
    <property type="term" value="C:cytoplasm"/>
    <property type="evidence" value="ECO:0007669"/>
    <property type="project" value="UniProtKB-SubCell"/>
</dbReference>
<dbReference type="GO" id="GO:0008666">
    <property type="term" value="F:2,3,4,5-tetrahydropyridine-2,6-dicarboxylate N-succinyltransferase activity"/>
    <property type="evidence" value="ECO:0007669"/>
    <property type="project" value="UniProtKB-UniRule"/>
</dbReference>
<dbReference type="GO" id="GO:0016779">
    <property type="term" value="F:nucleotidyltransferase activity"/>
    <property type="evidence" value="ECO:0007669"/>
    <property type="project" value="TreeGrafter"/>
</dbReference>
<dbReference type="GO" id="GO:0019877">
    <property type="term" value="P:diaminopimelate biosynthetic process"/>
    <property type="evidence" value="ECO:0007669"/>
    <property type="project" value="UniProtKB-UniRule"/>
</dbReference>
<dbReference type="GO" id="GO:0009089">
    <property type="term" value="P:lysine biosynthetic process via diaminopimelate"/>
    <property type="evidence" value="ECO:0007669"/>
    <property type="project" value="UniProtKB-UniRule"/>
</dbReference>
<dbReference type="CDD" id="cd03350">
    <property type="entry name" value="LbH_THP_succinylT"/>
    <property type="match status" value="1"/>
</dbReference>
<dbReference type="Gene3D" id="2.160.10.10">
    <property type="entry name" value="Hexapeptide repeat proteins"/>
    <property type="match status" value="1"/>
</dbReference>
<dbReference type="Gene3D" id="1.10.166.10">
    <property type="entry name" value="Tetrahydrodipicolinate-N-succinyltransferase, N-terminal domain"/>
    <property type="match status" value="1"/>
</dbReference>
<dbReference type="HAMAP" id="MF_00811">
    <property type="entry name" value="DapD"/>
    <property type="match status" value="1"/>
</dbReference>
<dbReference type="InterPro" id="IPR005664">
    <property type="entry name" value="DapD_Trfase_Hexpep_rpt_fam"/>
</dbReference>
<dbReference type="InterPro" id="IPR001451">
    <property type="entry name" value="Hexapep"/>
</dbReference>
<dbReference type="InterPro" id="IPR018357">
    <property type="entry name" value="Hexapep_transf_CS"/>
</dbReference>
<dbReference type="InterPro" id="IPR023180">
    <property type="entry name" value="THP_succinylTrfase_dom1"/>
</dbReference>
<dbReference type="InterPro" id="IPR037133">
    <property type="entry name" value="THP_succinylTrfase_N_sf"/>
</dbReference>
<dbReference type="InterPro" id="IPR011004">
    <property type="entry name" value="Trimer_LpxA-like_sf"/>
</dbReference>
<dbReference type="NCBIfam" id="TIGR00965">
    <property type="entry name" value="dapD"/>
    <property type="match status" value="1"/>
</dbReference>
<dbReference type="NCBIfam" id="NF008808">
    <property type="entry name" value="PRK11830.1"/>
    <property type="match status" value="1"/>
</dbReference>
<dbReference type="PANTHER" id="PTHR19136:SF52">
    <property type="entry name" value="2,3,4,5-TETRAHYDROPYRIDINE-2,6-DICARBOXYLATE N-SUCCINYLTRANSFERASE"/>
    <property type="match status" value="1"/>
</dbReference>
<dbReference type="PANTHER" id="PTHR19136">
    <property type="entry name" value="MOLYBDENUM COFACTOR GUANYLYLTRANSFERASE"/>
    <property type="match status" value="1"/>
</dbReference>
<dbReference type="Pfam" id="PF14602">
    <property type="entry name" value="Hexapep_2"/>
    <property type="match status" value="1"/>
</dbReference>
<dbReference type="Pfam" id="PF14805">
    <property type="entry name" value="THDPS_N_2"/>
    <property type="match status" value="1"/>
</dbReference>
<dbReference type="SUPFAM" id="SSF51161">
    <property type="entry name" value="Trimeric LpxA-like enzymes"/>
    <property type="match status" value="1"/>
</dbReference>
<dbReference type="PROSITE" id="PS00101">
    <property type="entry name" value="HEXAPEP_TRANSFERASES"/>
    <property type="match status" value="1"/>
</dbReference>
<name>DAPD_AERHH</name>
<accession>A0KHG0</accession>
<protein>
    <recommendedName>
        <fullName evidence="1">2,3,4,5-tetrahydropyridine-2,6-dicarboxylate N-succinyltransferase</fullName>
        <ecNumber evidence="1">2.3.1.117</ecNumber>
    </recommendedName>
    <alternativeName>
        <fullName evidence="1">Tetrahydrodipicolinate N-succinyltransferase</fullName>
        <shortName evidence="1">THDP succinyltransferase</shortName>
        <shortName evidence="1">THP succinyltransferase</shortName>
        <shortName evidence="1">Tetrahydropicolinate succinylase</shortName>
    </alternativeName>
</protein>
<organism>
    <name type="scientific">Aeromonas hydrophila subsp. hydrophila (strain ATCC 7966 / DSM 30187 / BCRC 13018 / CCUG 14551 / JCM 1027 / KCTC 2358 / NCIMB 9240 / NCTC 8049)</name>
    <dbReference type="NCBI Taxonomy" id="380703"/>
    <lineage>
        <taxon>Bacteria</taxon>
        <taxon>Pseudomonadati</taxon>
        <taxon>Pseudomonadota</taxon>
        <taxon>Gammaproteobacteria</taxon>
        <taxon>Aeromonadales</taxon>
        <taxon>Aeromonadaceae</taxon>
        <taxon>Aeromonas</taxon>
    </lineage>
</organism>
<evidence type="ECO:0000255" key="1">
    <source>
        <dbReference type="HAMAP-Rule" id="MF_00811"/>
    </source>
</evidence>
<sequence length="275" mass="29420">MTELQQIIEAAFERRDSITPGSVDAATKAAILQAIDLLDSGKARVAEKIAGEWVVHQWLKKAVLLYFRINDNGIIKGDDAQYYDKVPLKFSDYSAEQFKAAGVRVVPPATARKGSFIAPNTVLMPSYVNIGAFVDEGTMVDTWATVGSCAQIGKNVHLSGGVGIGGVLEPLQANPTIIEDNCFIGARSEVVEGVIVEEGSVISMGVFIGQSTRIYDRETGEIHYGRVPAGSVVVSGSLPSKCGKYSLYAAVIVKKVDAKTRAKVGINALLRSIDE</sequence>
<proteinExistence type="inferred from homology"/>
<reference key="1">
    <citation type="journal article" date="2006" name="J. Bacteriol.">
        <title>Genome sequence of Aeromonas hydrophila ATCC 7966T: jack of all trades.</title>
        <authorList>
            <person name="Seshadri R."/>
            <person name="Joseph S.W."/>
            <person name="Chopra A.K."/>
            <person name="Sha J."/>
            <person name="Shaw J."/>
            <person name="Graf J."/>
            <person name="Haft D.H."/>
            <person name="Wu M."/>
            <person name="Ren Q."/>
            <person name="Rosovitz M.J."/>
            <person name="Madupu R."/>
            <person name="Tallon L."/>
            <person name="Kim M."/>
            <person name="Jin S."/>
            <person name="Vuong H."/>
            <person name="Stine O.C."/>
            <person name="Ali A."/>
            <person name="Horneman A.J."/>
            <person name="Heidelberg J.F."/>
        </authorList>
    </citation>
    <scope>NUCLEOTIDE SEQUENCE [LARGE SCALE GENOMIC DNA]</scope>
    <source>
        <strain>ATCC 7966 / DSM 30187 / BCRC 13018 / CCUG 14551 / JCM 1027 / KCTC 2358 / NCIMB 9240 / NCTC 8049</strain>
    </source>
</reference>
<keyword id="KW-0012">Acyltransferase</keyword>
<keyword id="KW-0028">Amino-acid biosynthesis</keyword>
<keyword id="KW-0963">Cytoplasm</keyword>
<keyword id="KW-0220">Diaminopimelate biosynthesis</keyword>
<keyword id="KW-0457">Lysine biosynthesis</keyword>
<keyword id="KW-1185">Reference proteome</keyword>
<keyword id="KW-0677">Repeat</keyword>
<keyword id="KW-0808">Transferase</keyword>